<feature type="chain" id="PRO_0000156190" description="Phosphopantetheine adenylyltransferase">
    <location>
        <begin position="1"/>
        <end position="163"/>
    </location>
</feature>
<feature type="binding site" evidence="1">
    <location>
        <begin position="9"/>
        <end position="10"/>
    </location>
    <ligand>
        <name>ATP</name>
        <dbReference type="ChEBI" id="CHEBI:30616"/>
    </ligand>
</feature>
<feature type="binding site" evidence="1">
    <location>
        <position position="9"/>
    </location>
    <ligand>
        <name>substrate</name>
    </ligand>
</feature>
<feature type="binding site" evidence="1">
    <location>
        <position position="17"/>
    </location>
    <ligand>
        <name>ATP</name>
        <dbReference type="ChEBI" id="CHEBI:30616"/>
    </ligand>
</feature>
<feature type="binding site" evidence="1">
    <location>
        <position position="41"/>
    </location>
    <ligand>
        <name>substrate</name>
    </ligand>
</feature>
<feature type="binding site" evidence="1">
    <location>
        <position position="76"/>
    </location>
    <ligand>
        <name>substrate</name>
    </ligand>
</feature>
<feature type="binding site" evidence="1">
    <location>
        <position position="90"/>
    </location>
    <ligand>
        <name>substrate</name>
    </ligand>
</feature>
<feature type="binding site" evidence="1">
    <location>
        <begin position="91"/>
        <end position="93"/>
    </location>
    <ligand>
        <name>ATP</name>
        <dbReference type="ChEBI" id="CHEBI:30616"/>
    </ligand>
</feature>
<feature type="binding site" evidence="1">
    <location>
        <position position="101"/>
    </location>
    <ligand>
        <name>ATP</name>
        <dbReference type="ChEBI" id="CHEBI:30616"/>
    </ligand>
</feature>
<feature type="binding site" evidence="1">
    <location>
        <begin position="126"/>
        <end position="132"/>
    </location>
    <ligand>
        <name>ATP</name>
        <dbReference type="ChEBI" id="CHEBI:30616"/>
    </ligand>
</feature>
<feature type="site" description="Transition state stabilizer" evidence="1">
    <location>
        <position position="17"/>
    </location>
</feature>
<organism>
    <name type="scientific">Caulobacter vibrioides (strain ATCC 19089 / CIP 103742 / CB 15)</name>
    <name type="common">Caulobacter crescentus</name>
    <dbReference type="NCBI Taxonomy" id="190650"/>
    <lineage>
        <taxon>Bacteria</taxon>
        <taxon>Pseudomonadati</taxon>
        <taxon>Pseudomonadota</taxon>
        <taxon>Alphaproteobacteria</taxon>
        <taxon>Caulobacterales</taxon>
        <taxon>Caulobacteraceae</taxon>
        <taxon>Caulobacter</taxon>
    </lineage>
</organism>
<keyword id="KW-0067">ATP-binding</keyword>
<keyword id="KW-0173">Coenzyme A biosynthesis</keyword>
<keyword id="KW-0963">Cytoplasm</keyword>
<keyword id="KW-0460">Magnesium</keyword>
<keyword id="KW-0547">Nucleotide-binding</keyword>
<keyword id="KW-0548">Nucleotidyltransferase</keyword>
<keyword id="KW-1185">Reference proteome</keyword>
<keyword id="KW-0808">Transferase</keyword>
<name>COAD_CAUVC</name>
<reference key="1">
    <citation type="journal article" date="2001" name="Proc. Natl. Acad. Sci. U.S.A.">
        <title>Complete genome sequence of Caulobacter crescentus.</title>
        <authorList>
            <person name="Nierman W.C."/>
            <person name="Feldblyum T.V."/>
            <person name="Laub M.T."/>
            <person name="Paulsen I.T."/>
            <person name="Nelson K.E."/>
            <person name="Eisen J.A."/>
            <person name="Heidelberg J.F."/>
            <person name="Alley M.R.K."/>
            <person name="Ohta N."/>
            <person name="Maddock J.R."/>
            <person name="Potocka I."/>
            <person name="Nelson W.C."/>
            <person name="Newton A."/>
            <person name="Stephens C."/>
            <person name="Phadke N.D."/>
            <person name="Ely B."/>
            <person name="DeBoy R.T."/>
            <person name="Dodson R.J."/>
            <person name="Durkin A.S."/>
            <person name="Gwinn M.L."/>
            <person name="Haft D.H."/>
            <person name="Kolonay J.F."/>
            <person name="Smit J."/>
            <person name="Craven M.B."/>
            <person name="Khouri H.M."/>
            <person name="Shetty J."/>
            <person name="Berry K.J."/>
            <person name="Utterback T.R."/>
            <person name="Tran K."/>
            <person name="Wolf A.M."/>
            <person name="Vamathevan J.J."/>
            <person name="Ermolaeva M.D."/>
            <person name="White O."/>
            <person name="Salzberg S.L."/>
            <person name="Venter J.C."/>
            <person name="Shapiro L."/>
            <person name="Fraser C.M."/>
        </authorList>
    </citation>
    <scope>NUCLEOTIDE SEQUENCE [LARGE SCALE GENOMIC DNA]</scope>
    <source>
        <strain>ATCC 19089 / CIP 103742 / CB 15</strain>
    </source>
</reference>
<accession>P58103</accession>
<sequence length="163" mass="18061">MRVGLYPGTFDPVTNGHLDIIGRAVKLVDKLVIGVAINIGKGPLFSLEERVEILERETAHLKKIAEIEVRPFDSLLMHFARDVNAQMIVRGLRAVADFEYEFQMTAMNQQLDREIETVFLMADPRHQAIASRLVKEIATLGGDIGKFVPPGVAQQLLAKVGKG</sequence>
<proteinExistence type="inferred from homology"/>
<comment type="function">
    <text evidence="1">Reversibly transfers an adenylyl group from ATP to 4'-phosphopantetheine, yielding dephospho-CoA (dPCoA) and pyrophosphate.</text>
</comment>
<comment type="catalytic activity">
    <reaction evidence="1">
        <text>(R)-4'-phosphopantetheine + ATP + H(+) = 3'-dephospho-CoA + diphosphate</text>
        <dbReference type="Rhea" id="RHEA:19801"/>
        <dbReference type="ChEBI" id="CHEBI:15378"/>
        <dbReference type="ChEBI" id="CHEBI:30616"/>
        <dbReference type="ChEBI" id="CHEBI:33019"/>
        <dbReference type="ChEBI" id="CHEBI:57328"/>
        <dbReference type="ChEBI" id="CHEBI:61723"/>
        <dbReference type="EC" id="2.7.7.3"/>
    </reaction>
</comment>
<comment type="cofactor">
    <cofactor evidence="1">
        <name>Mg(2+)</name>
        <dbReference type="ChEBI" id="CHEBI:18420"/>
    </cofactor>
</comment>
<comment type="pathway">
    <text evidence="1">Cofactor biosynthesis; coenzyme A biosynthesis; CoA from (R)-pantothenate: step 4/5.</text>
</comment>
<comment type="subunit">
    <text evidence="1">Homohexamer.</text>
</comment>
<comment type="subcellular location">
    <subcellularLocation>
        <location evidence="1">Cytoplasm</location>
    </subcellularLocation>
</comment>
<comment type="similarity">
    <text evidence="1">Belongs to the bacterial CoaD family.</text>
</comment>
<protein>
    <recommendedName>
        <fullName evidence="1">Phosphopantetheine adenylyltransferase</fullName>
        <ecNumber evidence="1">2.7.7.3</ecNumber>
    </recommendedName>
    <alternativeName>
        <fullName evidence="1">Dephospho-CoA pyrophosphorylase</fullName>
    </alternativeName>
    <alternativeName>
        <fullName evidence="1">Pantetheine-phosphate adenylyltransferase</fullName>
        <shortName evidence="1">PPAT</shortName>
    </alternativeName>
</protein>
<gene>
    <name evidence="1" type="primary">coaD</name>
    <name type="ordered locus">CC_1581</name>
</gene>
<dbReference type="EC" id="2.7.7.3" evidence="1"/>
<dbReference type="EMBL" id="AE005673">
    <property type="protein sequence ID" value="AAK23560.1"/>
    <property type="molecule type" value="Genomic_DNA"/>
</dbReference>
<dbReference type="PIR" id="D87445">
    <property type="entry name" value="D87445"/>
</dbReference>
<dbReference type="RefSeq" id="NP_420392.1">
    <property type="nucleotide sequence ID" value="NC_002696.2"/>
</dbReference>
<dbReference type="RefSeq" id="WP_010919455.1">
    <property type="nucleotide sequence ID" value="NC_002696.2"/>
</dbReference>
<dbReference type="SMR" id="P58103"/>
<dbReference type="STRING" id="190650.CC_1581"/>
<dbReference type="EnsemblBacteria" id="AAK23560">
    <property type="protein sequence ID" value="AAK23560"/>
    <property type="gene ID" value="CC_1581"/>
</dbReference>
<dbReference type="KEGG" id="ccr:CC_1581"/>
<dbReference type="PATRIC" id="fig|190650.5.peg.1609"/>
<dbReference type="eggNOG" id="COG0669">
    <property type="taxonomic scope" value="Bacteria"/>
</dbReference>
<dbReference type="HOGENOM" id="CLU_100149_0_1_5"/>
<dbReference type="BioCyc" id="CAULO:CC1581-MONOMER"/>
<dbReference type="UniPathway" id="UPA00241">
    <property type="reaction ID" value="UER00355"/>
</dbReference>
<dbReference type="Proteomes" id="UP000001816">
    <property type="component" value="Chromosome"/>
</dbReference>
<dbReference type="GO" id="GO:0005737">
    <property type="term" value="C:cytoplasm"/>
    <property type="evidence" value="ECO:0007669"/>
    <property type="project" value="UniProtKB-SubCell"/>
</dbReference>
<dbReference type="GO" id="GO:0005524">
    <property type="term" value="F:ATP binding"/>
    <property type="evidence" value="ECO:0007669"/>
    <property type="project" value="UniProtKB-KW"/>
</dbReference>
<dbReference type="GO" id="GO:0004595">
    <property type="term" value="F:pantetheine-phosphate adenylyltransferase activity"/>
    <property type="evidence" value="ECO:0007669"/>
    <property type="project" value="UniProtKB-UniRule"/>
</dbReference>
<dbReference type="GO" id="GO:0015937">
    <property type="term" value="P:coenzyme A biosynthetic process"/>
    <property type="evidence" value="ECO:0007669"/>
    <property type="project" value="UniProtKB-UniRule"/>
</dbReference>
<dbReference type="CDD" id="cd02163">
    <property type="entry name" value="PPAT"/>
    <property type="match status" value="1"/>
</dbReference>
<dbReference type="Gene3D" id="3.40.50.620">
    <property type="entry name" value="HUPs"/>
    <property type="match status" value="1"/>
</dbReference>
<dbReference type="HAMAP" id="MF_00151">
    <property type="entry name" value="PPAT_bact"/>
    <property type="match status" value="1"/>
</dbReference>
<dbReference type="InterPro" id="IPR004821">
    <property type="entry name" value="Cyt_trans-like"/>
</dbReference>
<dbReference type="InterPro" id="IPR001980">
    <property type="entry name" value="PPAT"/>
</dbReference>
<dbReference type="InterPro" id="IPR014729">
    <property type="entry name" value="Rossmann-like_a/b/a_fold"/>
</dbReference>
<dbReference type="NCBIfam" id="TIGR01510">
    <property type="entry name" value="coaD_prev_kdtB"/>
    <property type="match status" value="1"/>
</dbReference>
<dbReference type="NCBIfam" id="TIGR00125">
    <property type="entry name" value="cyt_tran_rel"/>
    <property type="match status" value="1"/>
</dbReference>
<dbReference type="PANTHER" id="PTHR21342">
    <property type="entry name" value="PHOSPHOPANTETHEINE ADENYLYLTRANSFERASE"/>
    <property type="match status" value="1"/>
</dbReference>
<dbReference type="PANTHER" id="PTHR21342:SF1">
    <property type="entry name" value="PHOSPHOPANTETHEINE ADENYLYLTRANSFERASE"/>
    <property type="match status" value="1"/>
</dbReference>
<dbReference type="Pfam" id="PF01467">
    <property type="entry name" value="CTP_transf_like"/>
    <property type="match status" value="1"/>
</dbReference>
<dbReference type="PRINTS" id="PR01020">
    <property type="entry name" value="LPSBIOSNTHSS"/>
</dbReference>
<dbReference type="SUPFAM" id="SSF52374">
    <property type="entry name" value="Nucleotidylyl transferase"/>
    <property type="match status" value="1"/>
</dbReference>
<evidence type="ECO:0000255" key="1">
    <source>
        <dbReference type="HAMAP-Rule" id="MF_00151"/>
    </source>
</evidence>